<sequence length="1054" mass="115111">MRFKSVFTLLPLLAQLPSGGASLPNNHGRVENCVRNHDGIHKFRHSNNTYQSMFPGVTWDEDQWVLTTSSLDQGHYQSRGSVANGYIGISVSSVGPFFELDLPVAGDVINGWPLYSRRQSFATISGFFDIQAETNGSNFPWMNQYGGESVISGVPHWSGLILDLGDDDYLDSTVDNVTLSDFKSSYDFKAGVLSWSYTWTPAGDKGSYAITYRLFANKLNVNQAVVDMEITPSQDGHATIVNVLDGYSAVRTDFVESQEDDGAIYSAVRPWGIPDVSAYFYANITGSKHVDLSSRRLIHGKPYVSANESSIAQAADVNFVANEKVRITKFVGAASTDAFPDPQATAKRAVSEALDAGYQRSLRSHVQEWASIMHEDSVDRYVNPTTGKLPDDDNIINSAIIAVANTYYLLQNTVGKNAIRAAQDAPLNVNSFSVGGLVSDSYAGLVFWDADVWMQPGLVASHPEAAQAVTNYRTKLYPQAKKNIETTYTGSKNATYIDPSAAIYPWTSGRFGNCTGTGACWDYQYHLNGDIGLSLIYQWVVSGDTNTFREKHFPIYDSVAALYGSIVERNGSYWTLTNMTDPDEYANHIDAGGFTMPMISETLEYANQFRQQFGLEPNETWTEISENVLVLRENGVTLEYTTMNGTAAVKQADIVLVTYPLVYDNYTAETALTDLDYYANRQSADGPAMTWAIFSIAAGAVSPSGCSAYTYHQYSYAPYARAPFFQLSEQMLDNASINGGTHPAYPFLTGHGGANQVVLFGYLGLRLLPDDAIHIEPNLPPQIPYVKYRTFYWRGWPISAQSNYTHTVLQRSQSAPLDTADRRFANTSIPVFVGLADNATLHHLPPHGPLTVRNREIGTINTIEDNLIQCSPVSSTDAFEQGQFPISVVDGATSTRWQPSSSNASAVTVNLGSTTGRSVQTVASGFHFDWAAAPPVNASVIFHDTPLSDPVAALSSPGPHVRIVANLTNIEQSGPYDPEATDLNEIKIPVGNTTRIELAQEVPVGRYATLVISGNQALAQADGEDHVGATVAEWAILGPKSGSPRRRIQPVPLL</sequence>
<proteinExistence type="inferred from homology"/>
<comment type="catalytic activity">
    <reaction>
        <text>alpha,alpha-trehalose + H2O = alpha-D-glucose + beta-D-glucose</text>
        <dbReference type="Rhea" id="RHEA:32675"/>
        <dbReference type="ChEBI" id="CHEBI:15377"/>
        <dbReference type="ChEBI" id="CHEBI:15903"/>
        <dbReference type="ChEBI" id="CHEBI:16551"/>
        <dbReference type="ChEBI" id="CHEBI:17925"/>
        <dbReference type="EC" id="3.2.1.28"/>
    </reaction>
</comment>
<comment type="similarity">
    <text evidence="3">Belongs to the glycosyl hydrolase 65 family.</text>
</comment>
<comment type="sequence caution" evidence="3">
    <conflict type="erroneous gene model prediction">
        <sequence resource="EMBL-CDS" id="CBF87435"/>
    </conflict>
</comment>
<comment type="sequence caution" evidence="3">
    <conflict type="erroneous gene model prediction">
        <sequence resource="EMBL-CDS" id="EAA66407"/>
    </conflict>
</comment>
<name>TREA_EMENI</name>
<organism>
    <name type="scientific">Emericella nidulans (strain FGSC A4 / ATCC 38163 / CBS 112.46 / NRRL 194 / M139)</name>
    <name type="common">Aspergillus nidulans</name>
    <dbReference type="NCBI Taxonomy" id="227321"/>
    <lineage>
        <taxon>Eukaryota</taxon>
        <taxon>Fungi</taxon>
        <taxon>Dikarya</taxon>
        <taxon>Ascomycota</taxon>
        <taxon>Pezizomycotina</taxon>
        <taxon>Eurotiomycetes</taxon>
        <taxon>Eurotiomycetidae</taxon>
        <taxon>Eurotiales</taxon>
        <taxon>Aspergillaceae</taxon>
        <taxon>Aspergillus</taxon>
        <taxon>Aspergillus subgen. Nidulantes</taxon>
    </lineage>
</organism>
<feature type="signal peptide" evidence="2">
    <location>
        <begin position="1"/>
        <end position="21"/>
    </location>
</feature>
<feature type="chain" id="PRO_0000012109" description="Acid trehalase">
    <location>
        <begin position="22"/>
        <end position="1054"/>
    </location>
</feature>
<feature type="active site" description="Proton donor" evidence="1">
    <location>
        <position position="584"/>
    </location>
</feature>
<feature type="binding site" evidence="1">
    <location>
        <begin position="448"/>
        <end position="449"/>
    </location>
    <ligand>
        <name>substrate</name>
    </ligand>
</feature>
<feature type="binding site" evidence="1">
    <location>
        <begin position="650"/>
        <end position="651"/>
    </location>
    <ligand>
        <name>substrate</name>
    </ligand>
</feature>
<feature type="glycosylation site" description="N-linked (GlcNAc...) asparagine" evidence="2">
    <location>
        <position position="47"/>
    </location>
</feature>
<feature type="glycosylation site" description="N-linked (GlcNAc...) asparagine" evidence="2">
    <location>
        <position position="135"/>
    </location>
</feature>
<feature type="glycosylation site" description="N-linked (GlcNAc...) asparagine" evidence="2">
    <location>
        <position position="176"/>
    </location>
</feature>
<feature type="glycosylation site" description="N-linked (GlcNAc...) asparagine" evidence="2">
    <location>
        <position position="283"/>
    </location>
</feature>
<feature type="glycosylation site" description="N-linked (GlcNAc...) asparagine" evidence="2">
    <location>
        <position position="307"/>
    </location>
</feature>
<feature type="glycosylation site" description="N-linked (GlcNAc...) asparagine" evidence="2">
    <location>
        <position position="493"/>
    </location>
</feature>
<feature type="glycosylation site" description="N-linked (GlcNAc...) asparagine" evidence="2">
    <location>
        <position position="513"/>
    </location>
</feature>
<feature type="glycosylation site" description="N-linked (GlcNAc...) asparagine" evidence="2">
    <location>
        <position position="570"/>
    </location>
</feature>
<feature type="glycosylation site" description="N-linked (GlcNAc...) asparagine" evidence="2">
    <location>
        <position position="578"/>
    </location>
</feature>
<feature type="glycosylation site" description="N-linked (GlcNAc...) asparagine" evidence="2">
    <location>
        <position position="618"/>
    </location>
</feature>
<feature type="glycosylation site" description="N-linked (GlcNAc...) asparagine" evidence="2">
    <location>
        <position position="644"/>
    </location>
</feature>
<feature type="glycosylation site" description="N-linked (GlcNAc...) asparagine" evidence="2">
    <location>
        <position position="665"/>
    </location>
</feature>
<feature type="glycosylation site" description="N-linked (GlcNAc...) asparagine" evidence="2">
    <location>
        <position position="734"/>
    </location>
</feature>
<feature type="glycosylation site" description="N-linked (GlcNAc...) asparagine" evidence="2">
    <location>
        <position position="803"/>
    </location>
</feature>
<feature type="glycosylation site" description="N-linked (GlcNAc...) asparagine" evidence="2">
    <location>
        <position position="826"/>
    </location>
</feature>
<feature type="glycosylation site" description="N-linked (GlcNAc...) asparagine" evidence="2">
    <location>
        <position position="838"/>
    </location>
</feature>
<feature type="glycosylation site" description="N-linked (GlcNAc...) asparagine" evidence="2">
    <location>
        <position position="903"/>
    </location>
</feature>
<feature type="glycosylation site" description="N-linked (GlcNAc...) asparagine" evidence="2">
    <location>
        <position position="937"/>
    </location>
</feature>
<feature type="glycosylation site" description="N-linked (GlcNAc...) asparagine" evidence="2">
    <location>
        <position position="966"/>
    </location>
</feature>
<feature type="glycosylation site" description="N-linked (GlcNAc...) asparagine" evidence="2">
    <location>
        <position position="992"/>
    </location>
</feature>
<evidence type="ECO:0000250" key="1">
    <source>
        <dbReference type="UniProtKB" id="D6XZ22"/>
    </source>
</evidence>
<evidence type="ECO:0000255" key="2"/>
<evidence type="ECO:0000305" key="3"/>
<protein>
    <recommendedName>
        <fullName>Acid trehalase</fullName>
        <ecNumber>3.2.1.28</ecNumber>
    </recommendedName>
    <alternativeName>
        <fullName>Alpha,alpha-trehalase</fullName>
    </alternativeName>
    <alternativeName>
        <fullName>Alpha,alpha-trehalose glucohydrolase</fullName>
    </alternativeName>
</protein>
<accession>P78617</accession>
<accession>C8VR42</accession>
<accession>Q5AQU0</accession>
<keyword id="KW-0325">Glycoprotein</keyword>
<keyword id="KW-0326">Glycosidase</keyword>
<keyword id="KW-0378">Hydrolase</keyword>
<keyword id="KW-1185">Reference proteome</keyword>
<keyword id="KW-0732">Signal</keyword>
<gene>
    <name type="primary">treA</name>
    <name type="ORF">AN9340</name>
</gene>
<dbReference type="EC" id="3.2.1.28"/>
<dbReference type="EMBL" id="U75428">
    <property type="protein sequence ID" value="AAB57642.1"/>
    <property type="molecule type" value="Genomic_DNA"/>
</dbReference>
<dbReference type="EMBL" id="AACD01000172">
    <property type="protein sequence ID" value="EAA66407.1"/>
    <property type="status" value="ALT_SEQ"/>
    <property type="molecule type" value="Genomic_DNA"/>
</dbReference>
<dbReference type="EMBL" id="BN001308">
    <property type="protein sequence ID" value="CBF87435.1"/>
    <property type="status" value="ALT_SEQ"/>
    <property type="molecule type" value="Genomic_DNA"/>
</dbReference>
<dbReference type="PIR" id="T18304">
    <property type="entry name" value="T18304"/>
</dbReference>
<dbReference type="RefSeq" id="XP_682609.1">
    <property type="nucleotide sequence ID" value="XM_677517.1"/>
</dbReference>
<dbReference type="SMR" id="P78617"/>
<dbReference type="FunCoup" id="P78617">
    <property type="interactions" value="66"/>
</dbReference>
<dbReference type="STRING" id="227321.P78617"/>
<dbReference type="CAZy" id="GH65">
    <property type="family name" value="Glycoside Hydrolase Family 65"/>
</dbReference>
<dbReference type="GlyCosmos" id="P78617">
    <property type="glycosylation" value="20 sites, No reported glycans"/>
</dbReference>
<dbReference type="KEGG" id="ani:ANIA_09340"/>
<dbReference type="VEuPathDB" id="FungiDB:AN9340"/>
<dbReference type="eggNOG" id="KOG4125">
    <property type="taxonomic scope" value="Eukaryota"/>
</dbReference>
<dbReference type="HOGENOM" id="CLU_006285_4_0_1"/>
<dbReference type="InParanoid" id="P78617"/>
<dbReference type="OrthoDB" id="200349at2759"/>
<dbReference type="Proteomes" id="UP000000560">
    <property type="component" value="Chromosome VIII"/>
</dbReference>
<dbReference type="GO" id="GO:0005576">
    <property type="term" value="C:extracellular region"/>
    <property type="evidence" value="ECO:0000314"/>
    <property type="project" value="AspGD"/>
</dbReference>
<dbReference type="GO" id="GO:0009277">
    <property type="term" value="C:fungal-type cell wall"/>
    <property type="evidence" value="ECO:0000318"/>
    <property type="project" value="GO_Central"/>
</dbReference>
<dbReference type="GO" id="GO:0031160">
    <property type="term" value="C:spore wall"/>
    <property type="evidence" value="ECO:0000314"/>
    <property type="project" value="AspGD"/>
</dbReference>
<dbReference type="GO" id="GO:0004555">
    <property type="term" value="F:alpha,alpha-trehalase activity"/>
    <property type="evidence" value="ECO:0000315"/>
    <property type="project" value="AspGD"/>
</dbReference>
<dbReference type="GO" id="GO:0030246">
    <property type="term" value="F:carbohydrate binding"/>
    <property type="evidence" value="ECO:0007669"/>
    <property type="project" value="InterPro"/>
</dbReference>
<dbReference type="GO" id="GO:0005993">
    <property type="term" value="P:trehalose catabolic process"/>
    <property type="evidence" value="ECO:0000315"/>
    <property type="project" value="AspGD"/>
</dbReference>
<dbReference type="FunFam" id="2.70.98.40:FF:000004">
    <property type="entry name" value="Alpha,alpha-trehalose glucohydrolase TreA/Ath1"/>
    <property type="match status" value="1"/>
</dbReference>
<dbReference type="FunFam" id="1.50.10.10:FF:000032">
    <property type="entry name" value="Vacuolar acid trehalase"/>
    <property type="match status" value="1"/>
</dbReference>
<dbReference type="Gene3D" id="1.50.10.10">
    <property type="match status" value="1"/>
</dbReference>
<dbReference type="Gene3D" id="2.70.98.40">
    <property type="entry name" value="Glycoside hydrolase, family 65, N-terminal domain"/>
    <property type="match status" value="1"/>
</dbReference>
<dbReference type="InterPro" id="IPR008928">
    <property type="entry name" value="6-hairpin_glycosidase_sf"/>
</dbReference>
<dbReference type="InterPro" id="IPR012341">
    <property type="entry name" value="6hp_glycosidase-like_sf"/>
</dbReference>
<dbReference type="InterPro" id="IPR011013">
    <property type="entry name" value="Gal_mutarotase_sf_dom"/>
</dbReference>
<dbReference type="InterPro" id="IPR005195">
    <property type="entry name" value="Glyco_hydro_65_M"/>
</dbReference>
<dbReference type="InterPro" id="IPR005196">
    <property type="entry name" value="Glyco_hydro_65_N"/>
</dbReference>
<dbReference type="InterPro" id="IPR037018">
    <property type="entry name" value="Glyco_hydro_65_N_sf"/>
</dbReference>
<dbReference type="PANTHER" id="PTHR11051">
    <property type="entry name" value="GLYCOSYL HYDROLASE-RELATED"/>
    <property type="match status" value="1"/>
</dbReference>
<dbReference type="PANTHER" id="PTHR11051:SF8">
    <property type="entry name" value="PROTEIN-GLUCOSYLGALACTOSYLHYDROXYLYSINE GLUCOSIDASE"/>
    <property type="match status" value="1"/>
</dbReference>
<dbReference type="Pfam" id="PF03632">
    <property type="entry name" value="Glyco_hydro_65m"/>
    <property type="match status" value="1"/>
</dbReference>
<dbReference type="Pfam" id="PF03636">
    <property type="entry name" value="Glyco_hydro_65N"/>
    <property type="match status" value="1"/>
</dbReference>
<dbReference type="SUPFAM" id="SSF74650">
    <property type="entry name" value="Galactose mutarotase-like"/>
    <property type="match status" value="1"/>
</dbReference>
<dbReference type="SUPFAM" id="SSF48208">
    <property type="entry name" value="Six-hairpin glycosidases"/>
    <property type="match status" value="1"/>
</dbReference>
<reference key="1">
    <citation type="journal article" date="1997" name="Mol. Microbiol.">
        <title>Molecular characterization of the Aspergillus nidulans treA gene encoding an acid trehalase required for growth on trehalose.</title>
        <authorList>
            <person name="d'Enfert C."/>
            <person name="Fontaine T."/>
        </authorList>
    </citation>
    <scope>NUCLEOTIDE SEQUENCE [GENOMIC DNA]</scope>
</reference>
<reference key="2">
    <citation type="journal article" date="2005" name="Nature">
        <title>Sequencing of Aspergillus nidulans and comparative analysis with A. fumigatus and A. oryzae.</title>
        <authorList>
            <person name="Galagan J.E."/>
            <person name="Calvo S.E."/>
            <person name="Cuomo C."/>
            <person name="Ma L.-J."/>
            <person name="Wortman J.R."/>
            <person name="Batzoglou S."/>
            <person name="Lee S.-I."/>
            <person name="Bastuerkmen M."/>
            <person name="Spevak C.C."/>
            <person name="Clutterbuck J."/>
            <person name="Kapitonov V."/>
            <person name="Jurka J."/>
            <person name="Scazzocchio C."/>
            <person name="Farman M.L."/>
            <person name="Butler J."/>
            <person name="Purcell S."/>
            <person name="Harris S."/>
            <person name="Braus G.H."/>
            <person name="Draht O."/>
            <person name="Busch S."/>
            <person name="D'Enfert C."/>
            <person name="Bouchier C."/>
            <person name="Goldman G.H."/>
            <person name="Bell-Pedersen D."/>
            <person name="Griffiths-Jones S."/>
            <person name="Doonan J.H."/>
            <person name="Yu J."/>
            <person name="Vienken K."/>
            <person name="Pain A."/>
            <person name="Freitag M."/>
            <person name="Selker E.U."/>
            <person name="Archer D.B."/>
            <person name="Penalva M.A."/>
            <person name="Oakley B.R."/>
            <person name="Momany M."/>
            <person name="Tanaka T."/>
            <person name="Kumagai T."/>
            <person name="Asai K."/>
            <person name="Machida M."/>
            <person name="Nierman W.C."/>
            <person name="Denning D.W."/>
            <person name="Caddick M.X."/>
            <person name="Hynes M."/>
            <person name="Paoletti M."/>
            <person name="Fischer R."/>
            <person name="Miller B.L."/>
            <person name="Dyer P.S."/>
            <person name="Sachs M.S."/>
            <person name="Osmani S.A."/>
            <person name="Birren B.W."/>
        </authorList>
    </citation>
    <scope>NUCLEOTIDE SEQUENCE [LARGE SCALE GENOMIC DNA]</scope>
    <source>
        <strain>FGSC A4 / ATCC 38163 / CBS 112.46 / NRRL 194 / M139</strain>
    </source>
</reference>
<reference key="3">
    <citation type="journal article" date="2009" name="Fungal Genet. Biol.">
        <title>The 2008 update of the Aspergillus nidulans genome annotation: a community effort.</title>
        <authorList>
            <person name="Wortman J.R."/>
            <person name="Gilsenan J.M."/>
            <person name="Joardar V."/>
            <person name="Deegan J."/>
            <person name="Clutterbuck J."/>
            <person name="Andersen M.R."/>
            <person name="Archer D."/>
            <person name="Bencina M."/>
            <person name="Braus G."/>
            <person name="Coutinho P."/>
            <person name="von Dohren H."/>
            <person name="Doonan J."/>
            <person name="Driessen A.J."/>
            <person name="Durek P."/>
            <person name="Espeso E."/>
            <person name="Fekete E."/>
            <person name="Flipphi M."/>
            <person name="Estrada C.G."/>
            <person name="Geysens S."/>
            <person name="Goldman G."/>
            <person name="de Groot P.W."/>
            <person name="Hansen K."/>
            <person name="Harris S.D."/>
            <person name="Heinekamp T."/>
            <person name="Helmstaedt K."/>
            <person name="Henrissat B."/>
            <person name="Hofmann G."/>
            <person name="Homan T."/>
            <person name="Horio T."/>
            <person name="Horiuchi H."/>
            <person name="James S."/>
            <person name="Jones M."/>
            <person name="Karaffa L."/>
            <person name="Karanyi Z."/>
            <person name="Kato M."/>
            <person name="Keller N."/>
            <person name="Kelly D.E."/>
            <person name="Kiel J.A."/>
            <person name="Kim J.M."/>
            <person name="van der Klei I.J."/>
            <person name="Klis F.M."/>
            <person name="Kovalchuk A."/>
            <person name="Krasevec N."/>
            <person name="Kubicek C.P."/>
            <person name="Liu B."/>
            <person name="Maccabe A."/>
            <person name="Meyer V."/>
            <person name="Mirabito P."/>
            <person name="Miskei M."/>
            <person name="Mos M."/>
            <person name="Mullins J."/>
            <person name="Nelson D.R."/>
            <person name="Nielsen J."/>
            <person name="Oakley B.R."/>
            <person name="Osmani S.A."/>
            <person name="Pakula T."/>
            <person name="Paszewski A."/>
            <person name="Paulsen I."/>
            <person name="Pilsyk S."/>
            <person name="Pocsi I."/>
            <person name="Punt P.J."/>
            <person name="Ram A.F."/>
            <person name="Ren Q."/>
            <person name="Robellet X."/>
            <person name="Robson G."/>
            <person name="Seiboth B."/>
            <person name="van Solingen P."/>
            <person name="Specht T."/>
            <person name="Sun J."/>
            <person name="Taheri-Talesh N."/>
            <person name="Takeshita N."/>
            <person name="Ussery D."/>
            <person name="vanKuyk P.A."/>
            <person name="Visser H."/>
            <person name="van de Vondervoort P.J."/>
            <person name="de Vries R.P."/>
            <person name="Walton J."/>
            <person name="Xiang X."/>
            <person name="Xiong Y."/>
            <person name="Zeng A.P."/>
            <person name="Brandt B.W."/>
            <person name="Cornell M.J."/>
            <person name="van den Hondel C.A."/>
            <person name="Visser J."/>
            <person name="Oliver S.G."/>
            <person name="Turner G."/>
        </authorList>
    </citation>
    <scope>GENOME REANNOTATION</scope>
    <source>
        <strain>FGSC A4 / ATCC 38163 / CBS 112.46 / NRRL 194 / M139</strain>
    </source>
</reference>